<dbReference type="EC" id="3.2.1.37"/>
<dbReference type="EMBL" id="AB009972">
    <property type="protein sequence ID" value="BAA24107.1"/>
    <property type="molecule type" value="Genomic_DNA"/>
</dbReference>
<dbReference type="EMBL" id="AB013851">
    <property type="protein sequence ID" value="BAA28267.1"/>
    <property type="molecule type" value="Genomic_DNA"/>
</dbReference>
<dbReference type="EMBL" id="BA000049">
    <property type="protein sequence ID" value="BAE55977.1"/>
    <property type="molecule type" value="Genomic_DNA"/>
</dbReference>
<dbReference type="RefSeq" id="XP_001817979.1">
    <property type="nucleotide sequence ID" value="XM_001817927.1"/>
</dbReference>
<dbReference type="SMR" id="Q2UR38"/>
<dbReference type="STRING" id="510516.Q2UR38"/>
<dbReference type="CAZy" id="GH3">
    <property type="family name" value="Glycoside Hydrolase Family 3"/>
</dbReference>
<dbReference type="GlyCosmos" id="Q2UR38">
    <property type="glycosylation" value="15 sites, No reported glycans"/>
</dbReference>
<dbReference type="EnsemblFungi" id="BAE55977">
    <property type="protein sequence ID" value="BAE55977"/>
    <property type="gene ID" value="AO090005000986"/>
</dbReference>
<dbReference type="GeneID" id="5990515"/>
<dbReference type="KEGG" id="aor:AO090005000986"/>
<dbReference type="VEuPathDB" id="FungiDB:AO090005000986"/>
<dbReference type="HOGENOM" id="CLU_004542_5_3_1"/>
<dbReference type="OMA" id="TWNFVED"/>
<dbReference type="OrthoDB" id="73603at5052"/>
<dbReference type="UniPathway" id="UPA00114"/>
<dbReference type="Proteomes" id="UP000006564">
    <property type="component" value="Chromosome 1"/>
</dbReference>
<dbReference type="GO" id="GO:0005576">
    <property type="term" value="C:extracellular region"/>
    <property type="evidence" value="ECO:0000314"/>
    <property type="project" value="AspGD"/>
</dbReference>
<dbReference type="GO" id="GO:0046556">
    <property type="term" value="F:alpha-L-arabinofuranosidase activity"/>
    <property type="evidence" value="ECO:0007669"/>
    <property type="project" value="TreeGrafter"/>
</dbReference>
<dbReference type="GO" id="GO:0009044">
    <property type="term" value="F:xylan 1,4-beta-xylosidase activity"/>
    <property type="evidence" value="ECO:0000314"/>
    <property type="project" value="AspGD"/>
</dbReference>
<dbReference type="GO" id="GO:0031222">
    <property type="term" value="P:arabinan catabolic process"/>
    <property type="evidence" value="ECO:0007669"/>
    <property type="project" value="TreeGrafter"/>
</dbReference>
<dbReference type="GO" id="GO:0045493">
    <property type="term" value="P:xylan catabolic process"/>
    <property type="evidence" value="ECO:0000314"/>
    <property type="project" value="AspGD"/>
</dbReference>
<dbReference type="FunFam" id="2.60.40.10:FF:001420">
    <property type="entry name" value="Exo-1,4-beta-xylosidase xlnD"/>
    <property type="match status" value="1"/>
</dbReference>
<dbReference type="FunFam" id="3.20.20.300:FF:000009">
    <property type="entry name" value="Exo-1,4-beta-xylosidase xlnD"/>
    <property type="match status" value="1"/>
</dbReference>
<dbReference type="FunFam" id="3.40.50.1700:FF:000007">
    <property type="entry name" value="Exo-1,4-beta-xylosidase xlnD"/>
    <property type="match status" value="1"/>
</dbReference>
<dbReference type="Gene3D" id="3.40.50.1700">
    <property type="entry name" value="Glycoside hydrolase family 3 C-terminal domain"/>
    <property type="match status" value="1"/>
</dbReference>
<dbReference type="Gene3D" id="3.20.20.300">
    <property type="entry name" value="Glycoside hydrolase, family 3, N-terminal domain"/>
    <property type="match status" value="1"/>
</dbReference>
<dbReference type="Gene3D" id="2.60.40.10">
    <property type="entry name" value="Immunoglobulins"/>
    <property type="match status" value="1"/>
</dbReference>
<dbReference type="InterPro" id="IPR044993">
    <property type="entry name" value="BXL"/>
</dbReference>
<dbReference type="InterPro" id="IPR026891">
    <property type="entry name" value="Fn3-like"/>
</dbReference>
<dbReference type="InterPro" id="IPR002772">
    <property type="entry name" value="Glyco_hydro_3_C"/>
</dbReference>
<dbReference type="InterPro" id="IPR036881">
    <property type="entry name" value="Glyco_hydro_3_C_sf"/>
</dbReference>
<dbReference type="InterPro" id="IPR001764">
    <property type="entry name" value="Glyco_hydro_3_N"/>
</dbReference>
<dbReference type="InterPro" id="IPR036962">
    <property type="entry name" value="Glyco_hydro_3_N_sf"/>
</dbReference>
<dbReference type="InterPro" id="IPR017853">
    <property type="entry name" value="Glycoside_hydrolase_SF"/>
</dbReference>
<dbReference type="InterPro" id="IPR013783">
    <property type="entry name" value="Ig-like_fold"/>
</dbReference>
<dbReference type="PANTHER" id="PTHR42721:SF13">
    <property type="entry name" value="EXO-1,4-BETA-XYLOSIDASE XLND"/>
    <property type="match status" value="1"/>
</dbReference>
<dbReference type="PANTHER" id="PTHR42721">
    <property type="entry name" value="SUGAR HYDROLASE-RELATED"/>
    <property type="match status" value="1"/>
</dbReference>
<dbReference type="Pfam" id="PF14310">
    <property type="entry name" value="Fn3-like"/>
    <property type="match status" value="1"/>
</dbReference>
<dbReference type="Pfam" id="PF00933">
    <property type="entry name" value="Glyco_hydro_3"/>
    <property type="match status" value="1"/>
</dbReference>
<dbReference type="Pfam" id="PF01915">
    <property type="entry name" value="Glyco_hydro_3_C"/>
    <property type="match status" value="1"/>
</dbReference>
<dbReference type="SMART" id="SM01217">
    <property type="entry name" value="Fn3_like"/>
    <property type="match status" value="1"/>
</dbReference>
<dbReference type="SUPFAM" id="SSF51445">
    <property type="entry name" value="(Trans)glycosidases"/>
    <property type="match status" value="1"/>
</dbReference>
<dbReference type="SUPFAM" id="SSF52279">
    <property type="entry name" value="Beta-D-glucan exohydrolase, C-terminal domain"/>
    <property type="match status" value="1"/>
</dbReference>
<feature type="signal peptide" evidence="2">
    <location>
        <begin position="1"/>
        <end position="20"/>
    </location>
</feature>
<feature type="chain" id="PRO_0000393291" description="Exo-1,4-beta-xylosidase xlnD">
    <location>
        <begin position="21"/>
        <end position="798"/>
    </location>
</feature>
<feature type="active site" evidence="1">
    <location>
        <position position="310"/>
    </location>
</feature>
<feature type="glycosylation site" description="N-linked (GlcNAc...) asparagine" evidence="2">
    <location>
        <position position="23"/>
    </location>
</feature>
<feature type="glycosylation site" description="N-linked (GlcNAc...) asparagine" evidence="2">
    <location>
        <position position="87"/>
    </location>
</feature>
<feature type="glycosylation site" description="N-linked (GlcNAc...) asparagine" evidence="2">
    <location>
        <position position="142"/>
    </location>
</feature>
<feature type="glycosylation site" description="N-linked (GlcNAc...) asparagine" evidence="2">
    <location>
        <position position="237"/>
    </location>
</feature>
<feature type="glycosylation site" description="N-linked (GlcNAc...) asparagine" evidence="2">
    <location>
        <position position="326"/>
    </location>
</feature>
<feature type="glycosylation site" description="N-linked (GlcNAc...) asparagine" evidence="2">
    <location>
        <position position="391"/>
    </location>
</feature>
<feature type="glycosylation site" description="N-linked (GlcNAc...) asparagine" evidence="2">
    <location>
        <position position="404"/>
    </location>
</feature>
<feature type="glycosylation site" description="N-linked (GlcNAc...) asparagine" evidence="2">
    <location>
        <position position="443"/>
    </location>
</feature>
<feature type="glycosylation site" description="N-linked (GlcNAc...) asparagine" evidence="2">
    <location>
        <position position="480"/>
    </location>
</feature>
<feature type="glycosylation site" description="N-linked (GlcNAc...) asparagine" evidence="2">
    <location>
        <position position="522"/>
    </location>
</feature>
<feature type="glycosylation site" description="N-linked (GlcNAc...) asparagine" evidence="2">
    <location>
        <position position="618"/>
    </location>
</feature>
<feature type="glycosylation site" description="N-linked (GlcNAc...) asparagine" evidence="2">
    <location>
        <position position="645"/>
    </location>
</feature>
<feature type="glycosylation site" description="N-linked (GlcNAc...) asparagine" evidence="2">
    <location>
        <position position="658"/>
    </location>
</feature>
<feature type="glycosylation site" description="N-linked (GlcNAc...) asparagine" evidence="2">
    <location>
        <position position="685"/>
    </location>
</feature>
<feature type="glycosylation site" description="N-linked (GlcNAc...) asparagine" evidence="2">
    <location>
        <position position="707"/>
    </location>
</feature>
<feature type="sequence conflict" description="In Ref. 1; BAA24107." evidence="4" ref="1">
    <original>I</original>
    <variation>S</variation>
    <location>
        <position position="31"/>
    </location>
</feature>
<feature type="sequence conflict" description="In Ref. 1; BAA24107 and 2; BAA28267." evidence="4" ref="1 2">
    <original>G</original>
    <variation>D</variation>
    <location>
        <position position="124"/>
    </location>
</feature>
<feature type="sequence conflict" description="In Ref. 1; BAA24107 and 2; BAA28267." evidence="4" ref="1 2">
    <original>T</original>
    <variation>I</variation>
    <location>
        <position position="370"/>
    </location>
</feature>
<feature type="sequence conflict" description="In Ref. 1; BAA24107 and 2; BAA28267." evidence="4" ref="1 2">
    <original>S</original>
    <variation>G</variation>
    <location>
        <position position="653"/>
    </location>
</feature>
<feature type="sequence conflict" description="In Ref. 1; BAA24107 and 2; BAA28267." evidence="4" ref="1 2">
    <original>L</original>
    <variation>P</variation>
    <location>
        <position position="673"/>
    </location>
</feature>
<keyword id="KW-0119">Carbohydrate metabolism</keyword>
<keyword id="KW-0325">Glycoprotein</keyword>
<keyword id="KW-0326">Glycosidase</keyword>
<keyword id="KW-0378">Hydrolase</keyword>
<keyword id="KW-0624">Polysaccharide degradation</keyword>
<keyword id="KW-1185">Reference proteome</keyword>
<keyword id="KW-0964">Secreted</keyword>
<keyword id="KW-0732">Signal</keyword>
<keyword id="KW-0858">Xylan degradation</keyword>
<reference key="1">
    <citation type="submission" date="1997-12" db="EMBL/GenBank/DDBJ databases">
        <title>Xylosidase.</title>
        <authorList>
            <person name="Hashimoto T."/>
            <person name="Nakata Y."/>
            <person name="Tsuji Y."/>
            <person name="Ito K."/>
        </authorList>
    </citation>
    <scope>NUCLEOTIDE SEQUENCE [GENOMIC DNA]</scope>
    <source>
        <strain>HL15</strain>
    </source>
</reference>
<reference key="2">
    <citation type="journal article" date="1999" name="Appl. Environ. Microbiol.">
        <title>Sequence analysis, overexpression, and antisense inhibition of a beta-xylosidase gene, xylA, from Aspergillus oryzae KBN616.</title>
        <authorList>
            <person name="Kitamoto N."/>
            <person name="Yoshino S."/>
            <person name="Ohmiya K."/>
            <person name="Tsukagoshi N."/>
        </authorList>
    </citation>
    <scope>NUCLEOTIDE SEQUENCE [GENOMIC DNA]</scope>
    <scope>FUNCTION</scope>
    <scope>BIOPHYSICOCHEMICAL PROPERTIES</scope>
    <source>
        <strain>KBN616</strain>
    </source>
</reference>
<reference key="3">
    <citation type="journal article" date="2005" name="Nature">
        <title>Genome sequencing and analysis of Aspergillus oryzae.</title>
        <authorList>
            <person name="Machida M."/>
            <person name="Asai K."/>
            <person name="Sano M."/>
            <person name="Tanaka T."/>
            <person name="Kumagai T."/>
            <person name="Terai G."/>
            <person name="Kusumoto K."/>
            <person name="Arima T."/>
            <person name="Akita O."/>
            <person name="Kashiwagi Y."/>
            <person name="Abe K."/>
            <person name="Gomi K."/>
            <person name="Horiuchi H."/>
            <person name="Kitamoto K."/>
            <person name="Kobayashi T."/>
            <person name="Takeuchi M."/>
            <person name="Denning D.W."/>
            <person name="Galagan J.E."/>
            <person name="Nierman W.C."/>
            <person name="Yu J."/>
            <person name="Archer D.B."/>
            <person name="Bennett J.W."/>
            <person name="Bhatnagar D."/>
            <person name="Cleveland T.E."/>
            <person name="Fedorova N.D."/>
            <person name="Gotoh O."/>
            <person name="Horikawa H."/>
            <person name="Hosoyama A."/>
            <person name="Ichinomiya M."/>
            <person name="Igarashi R."/>
            <person name="Iwashita K."/>
            <person name="Juvvadi P.R."/>
            <person name="Kato M."/>
            <person name="Kato Y."/>
            <person name="Kin T."/>
            <person name="Kokubun A."/>
            <person name="Maeda H."/>
            <person name="Maeyama N."/>
            <person name="Maruyama J."/>
            <person name="Nagasaki H."/>
            <person name="Nakajima T."/>
            <person name="Oda K."/>
            <person name="Okada K."/>
            <person name="Paulsen I."/>
            <person name="Sakamoto K."/>
            <person name="Sawano T."/>
            <person name="Takahashi M."/>
            <person name="Takase K."/>
            <person name="Terabayashi Y."/>
            <person name="Wortman J.R."/>
            <person name="Yamada O."/>
            <person name="Yamagata Y."/>
            <person name="Anazawa H."/>
            <person name="Hata Y."/>
            <person name="Koide Y."/>
            <person name="Komori T."/>
            <person name="Koyama Y."/>
            <person name="Minetoki T."/>
            <person name="Suharnan S."/>
            <person name="Tanaka A."/>
            <person name="Isono K."/>
            <person name="Kuhara S."/>
            <person name="Ogasawara N."/>
            <person name="Kikuchi H."/>
        </authorList>
    </citation>
    <scope>NUCLEOTIDE SEQUENCE [LARGE SCALE GENOMIC DNA]</scope>
    <source>
        <strain>ATCC 42149 / RIB 40</strain>
    </source>
</reference>
<proteinExistence type="evidence at protein level"/>
<sequence length="798" mass="86452">MPGAASIVAVLAALLPTALGQANQSYVDYNIEANPDLFSECLETGGTSFPDCESGPLSKTLVCDTSAKPHDRAAALVSLLTFEELVNNTANTGHGAPRIGLPAYQVWNEALHGVAHADFSDAGGFSWSTSFPQPISTMAALNRTLIHQIATIISTQGRAFMNAGRYGLDVYSPNINTFRHPVWGRGQETPGEDAYCLASTYAYEYITGIQGGVDANPLKLIATAKHYAGYDIENWDNHSRLGNDMQITQQDLAEYYTPQFLVASRDAKVHSVMCSYNAVNGVPSCSNSFFLQTLLRDTFDFVEDGYVSGDCGAVYNVFNPHGYATNESSAAADSIRAGTDIDCGVSYPRHFQESFHDQEVSRQDLERGVTRLYASLIRAGYFDGKTSPYRNITWSDVVSTNAQNLSYEAAAQSIVLLKNDGILPLTSTSSSTKTIALIGPWANATTQMLGNYYGPAPYLISPLQAFQDSEYKITYTIGTNTTTDPDSTSQSTALTTAKEADLIIFAGGIDNTLETEAQDRSNITWPSNQLSLITKLADLGKPLIVLQMGGGQVDSSALKNNKNVNALIWGGYPGQSGGQALADIITGKRAPAARLVTTQYPAEYAEVFPAIDMNLRPNGSNPGQTYMWYTGTPVYEFGHGLFYTNFTASASASSGTKNRTSFNIDEVLGRPHLGYKLVEQMPLLNFTVDVKNTGDRVSDYTAMAFVNTTAGPAPHPNKWLVGFDRLSAVEPGSAKTMVIPVTVDSLARTDEEGNRVLYPGRYEVALNNEREVVLGFTLTGEKAVLFKWPKEEQLIAPQ</sequence>
<organism>
    <name type="scientific">Aspergillus oryzae (strain ATCC 42149 / RIB 40)</name>
    <name type="common">Yellow koji mold</name>
    <dbReference type="NCBI Taxonomy" id="510516"/>
    <lineage>
        <taxon>Eukaryota</taxon>
        <taxon>Fungi</taxon>
        <taxon>Dikarya</taxon>
        <taxon>Ascomycota</taxon>
        <taxon>Pezizomycotina</taxon>
        <taxon>Eurotiomycetes</taxon>
        <taxon>Eurotiomycetidae</taxon>
        <taxon>Eurotiales</taxon>
        <taxon>Aspergillaceae</taxon>
        <taxon>Aspergillus</taxon>
        <taxon>Aspergillus subgen. Circumdati</taxon>
    </lineage>
</organism>
<gene>
    <name type="primary">xlnD</name>
    <name type="synonym">xyl-1</name>
    <name type="synonym">xylA</name>
    <name type="ORF">AO090005000986</name>
</gene>
<evidence type="ECO:0000250" key="1"/>
<evidence type="ECO:0000255" key="2"/>
<evidence type="ECO:0000269" key="3">
    <source>
    </source>
</evidence>
<evidence type="ECO:0000305" key="4"/>
<comment type="function">
    <text evidence="3">Xylan 1,4-beta-xylosidase involved in the hydrolysis of xylan, a major structural heterogeneous polysaccharide found in plant biomass representing the second most abundant polysaccharide in the biosphere, after cellulose.</text>
</comment>
<comment type="catalytic activity">
    <reaction>
        <text>Hydrolysis of (1-&gt;4)-beta-D-xylans, to remove successive D-xylose residues from the non-reducing termini.</text>
        <dbReference type="EC" id="3.2.1.37"/>
    </reaction>
</comment>
<comment type="biophysicochemical properties">
    <phDependence>
        <text evidence="3">Optimum pH is 4.0. Stable in the wide pH range of 3.0 to 7.0.</text>
    </phDependence>
    <temperatureDependence>
        <text evidence="3">Stable at temperatures of up to 45 degrees Celsius and is inactivated gradually above 45 degrees Celsius.</text>
    </temperatureDependence>
</comment>
<comment type="pathway">
    <text>Glycan degradation; xylan degradation.</text>
</comment>
<comment type="subcellular location">
    <subcellularLocation>
        <location evidence="1">Secreted</location>
    </subcellularLocation>
</comment>
<comment type="similarity">
    <text evidence="4">Belongs to the glycosyl hydrolase 3 family.</text>
</comment>
<accession>Q2UR38</accession>
<accession>O42698</accession>
<accession>O59862</accession>
<protein>
    <recommendedName>
        <fullName>Exo-1,4-beta-xylosidase xlnD</fullName>
        <ecNumber>3.2.1.37</ecNumber>
    </recommendedName>
    <alternativeName>
        <fullName>1,4-beta-D-xylan xylohydrolase xlnD</fullName>
    </alternativeName>
    <alternativeName>
        <fullName>Beta-xylosidase A</fullName>
    </alternativeName>
    <alternativeName>
        <fullName>Beta-xylosidase xlnD</fullName>
    </alternativeName>
    <alternativeName>
        <fullName>Xylobiase xlnD</fullName>
    </alternativeName>
</protein>
<name>XYND_ASPOR</name>